<feature type="chain" id="PRO_0000074168" description="Cis-zeatin O-glucosyltransferase 2">
    <location>
        <begin position="1"/>
        <end position="463"/>
    </location>
</feature>
<feature type="active site" description="Proton acceptor" evidence="1">
    <location>
        <position position="21"/>
    </location>
</feature>
<feature type="active site" description="Charge relay" evidence="1">
    <location>
        <position position="127"/>
    </location>
</feature>
<feature type="binding site" evidence="2">
    <location>
        <position position="21"/>
    </location>
    <ligand>
        <name>an anthocyanidin</name>
        <dbReference type="ChEBI" id="CHEBI:143576"/>
    </ligand>
</feature>
<feature type="binding site" evidence="2">
    <location>
        <position position="91"/>
    </location>
    <ligand>
        <name>an anthocyanidin</name>
        <dbReference type="ChEBI" id="CHEBI:143576"/>
    </ligand>
</feature>
<feature type="binding site" evidence="1">
    <location>
        <position position="339"/>
    </location>
    <ligand>
        <name>UDP-alpha-D-glucose</name>
        <dbReference type="ChEBI" id="CHEBI:58885"/>
    </ligand>
</feature>
<feature type="binding site" evidence="1">
    <location>
        <position position="341"/>
    </location>
    <ligand>
        <name>UDP-alpha-D-glucose</name>
        <dbReference type="ChEBI" id="CHEBI:58885"/>
    </ligand>
</feature>
<feature type="binding site" evidence="1">
    <location>
        <position position="356"/>
    </location>
    <ligand>
        <name>UDP-alpha-D-glucose</name>
        <dbReference type="ChEBI" id="CHEBI:58885"/>
    </ligand>
</feature>
<feature type="binding site" evidence="1">
    <location>
        <position position="359"/>
    </location>
    <ligand>
        <name>UDP-alpha-D-glucose</name>
        <dbReference type="ChEBI" id="CHEBI:58885"/>
    </ligand>
</feature>
<feature type="binding site" evidence="1">
    <location>
        <position position="360"/>
    </location>
    <ligand>
        <name>UDP-alpha-D-glucose</name>
        <dbReference type="ChEBI" id="CHEBI:58885"/>
    </ligand>
</feature>
<feature type="binding site" evidence="1">
    <location>
        <position position="361"/>
    </location>
    <ligand>
        <name>UDP-alpha-D-glucose</name>
        <dbReference type="ChEBI" id="CHEBI:58885"/>
    </ligand>
</feature>
<feature type="binding site" evidence="1">
    <location>
        <position position="364"/>
    </location>
    <ligand>
        <name>UDP-alpha-D-glucose</name>
        <dbReference type="ChEBI" id="CHEBI:58885"/>
    </ligand>
</feature>
<feature type="binding site" evidence="1">
    <location>
        <position position="380"/>
    </location>
    <ligand>
        <name>UDP-alpha-D-glucose</name>
        <dbReference type="ChEBI" id="CHEBI:58885"/>
    </ligand>
</feature>
<feature type="binding site" evidence="1">
    <location>
        <position position="381"/>
    </location>
    <ligand>
        <name>UDP-alpha-D-glucose</name>
        <dbReference type="ChEBI" id="CHEBI:58885"/>
    </ligand>
</feature>
<reference key="1">
    <citation type="journal article" date="2003" name="Plant Physiol.">
        <title>O-glucosylation of cis-zeatin in maize. Characterization of genes, enzymes, and endogenous cytokinins.</title>
        <authorList>
            <person name="Veach Y.K."/>
            <person name="Martin R.C."/>
            <person name="Mok D.W.S."/>
            <person name="Malbeck J."/>
            <person name="Vankova R."/>
            <person name="Mok M.C."/>
        </authorList>
    </citation>
    <scope>NUCLEOTIDE SEQUENCE [GENOMIC DNA]</scope>
    <scope>FUNCTION</scope>
    <scope>CATALYTIC ACTIVITY</scope>
    <scope>TISSUE SPECIFICITY</scope>
    <scope>BIOPHYSICOCHEMICAL PROPERTIES</scope>
</reference>
<name>CZOG2_MAIZE</name>
<accession>Q8RXA5</accession>
<proteinExistence type="evidence at protein level"/>
<comment type="function">
    <text evidence="3">Utilizes UDP-glucose as the sugar donor and catalyzes the formation of O-beta-D-glucosyl-cis-zeatin from cis-zeatin. May regulate active versus storage forms of cytokinins and could have an impact on seed growth.</text>
</comment>
<comment type="catalytic activity">
    <reaction evidence="3">
        <text>cis-zeatin + UDP-alpha-D-glucose = O-beta-D-glucosyl-cis-zeatin + UDP + H(+)</text>
        <dbReference type="Rhea" id="RHEA:20681"/>
        <dbReference type="ChEBI" id="CHEBI:15378"/>
        <dbReference type="ChEBI" id="CHEBI:29043"/>
        <dbReference type="ChEBI" id="CHEBI:46570"/>
        <dbReference type="ChEBI" id="CHEBI:58223"/>
        <dbReference type="ChEBI" id="CHEBI:58885"/>
        <dbReference type="EC" id="2.4.1.215"/>
    </reaction>
</comment>
<comment type="biophysicochemical properties">
    <kinetics>
        <KM evidence="3">96 uM for cis-zeatin</KM>
    </kinetics>
    <phDependence>
        <text evidence="3">Optimum pH is 7.5.</text>
    </phDependence>
</comment>
<comment type="tissue specificity">
    <text evidence="3">Highly expressed in root. Expressed at much lower level in kernel. Weakly or not expressed in expressed in stems and leaves.</text>
</comment>
<comment type="similarity">
    <text evidence="5">Belongs to the UDP-glycosyltransferase family.</text>
</comment>
<dbReference type="EC" id="2.4.1.215" evidence="3"/>
<dbReference type="EMBL" id="AY082660">
    <property type="protein sequence ID" value="AAL92460.1"/>
    <property type="molecule type" value="Genomic_DNA"/>
</dbReference>
<dbReference type="RefSeq" id="XP_008657045.1">
    <property type="nucleotide sequence ID" value="XM_008658823.1"/>
</dbReference>
<dbReference type="SMR" id="Q8RXA5"/>
<dbReference type="FunCoup" id="Q8RXA5">
    <property type="interactions" value="31"/>
</dbReference>
<dbReference type="STRING" id="4577.Q8RXA5"/>
<dbReference type="CAZy" id="GT1">
    <property type="family name" value="Glycosyltransferase Family 1"/>
</dbReference>
<dbReference type="PaxDb" id="4577-GRMZM2G110511_P01"/>
<dbReference type="EnsemblPlants" id="Zm00001eb367250_T001">
    <property type="protein sequence ID" value="Zm00001eb367250_P001"/>
    <property type="gene ID" value="Zm00001eb367250"/>
</dbReference>
<dbReference type="Gramene" id="Zm00001eb367250_T001">
    <property type="protein sequence ID" value="Zm00001eb367250_P001"/>
    <property type="gene ID" value="Zm00001eb367250"/>
</dbReference>
<dbReference type="MaizeGDB" id="403575"/>
<dbReference type="eggNOG" id="KOG1192">
    <property type="taxonomic scope" value="Eukaryota"/>
</dbReference>
<dbReference type="HOGENOM" id="CLU_001724_2_1_1"/>
<dbReference type="InParanoid" id="Q8RXA5"/>
<dbReference type="OMA" id="WEKHADI"/>
<dbReference type="OrthoDB" id="5835829at2759"/>
<dbReference type="BioCyc" id="MetaCyc:CISZOG2-MONOMER"/>
<dbReference type="SABIO-RK" id="Q8RXA5"/>
<dbReference type="Proteomes" id="UP000007305">
    <property type="component" value="Chromosome 8"/>
</dbReference>
<dbReference type="ExpressionAtlas" id="Q8RXA5">
    <property type="expression patterns" value="baseline and differential"/>
</dbReference>
<dbReference type="GO" id="GO:0050502">
    <property type="term" value="F:cis-zeatin O-beta-D-glucosyltransferase activity"/>
    <property type="evidence" value="ECO:0000314"/>
    <property type="project" value="AgBase"/>
</dbReference>
<dbReference type="GO" id="GO:0035251">
    <property type="term" value="F:UDP-glucosyltransferase activity"/>
    <property type="evidence" value="ECO:0000318"/>
    <property type="project" value="GO_Central"/>
</dbReference>
<dbReference type="GO" id="GO:0006486">
    <property type="term" value="P:protein glycosylation"/>
    <property type="evidence" value="ECO:0000314"/>
    <property type="project" value="AgBase"/>
</dbReference>
<dbReference type="GO" id="GO:0080036">
    <property type="term" value="P:regulation of cytokinin-activated signaling pathway"/>
    <property type="evidence" value="ECO:0000304"/>
    <property type="project" value="AgBase"/>
</dbReference>
<dbReference type="CDD" id="cd03784">
    <property type="entry name" value="GT1_Gtf-like"/>
    <property type="match status" value="1"/>
</dbReference>
<dbReference type="FunFam" id="3.40.50.2000:FF:000060">
    <property type="entry name" value="Glycosyltransferase"/>
    <property type="match status" value="1"/>
</dbReference>
<dbReference type="FunFam" id="3.40.50.2000:FF:000117">
    <property type="entry name" value="Glycosyltransferase"/>
    <property type="match status" value="1"/>
</dbReference>
<dbReference type="Gene3D" id="3.40.50.2000">
    <property type="entry name" value="Glycogen Phosphorylase B"/>
    <property type="match status" value="3"/>
</dbReference>
<dbReference type="InterPro" id="IPR002213">
    <property type="entry name" value="UDP_glucos_trans"/>
</dbReference>
<dbReference type="InterPro" id="IPR035595">
    <property type="entry name" value="UDP_glycos_trans_CS"/>
</dbReference>
<dbReference type="PANTHER" id="PTHR48044:SF64">
    <property type="entry name" value="CIS-ZEATIN O-GLUCOSYLTRANSFERASE 1"/>
    <property type="match status" value="1"/>
</dbReference>
<dbReference type="PANTHER" id="PTHR48044">
    <property type="entry name" value="GLYCOSYLTRANSFERASE"/>
    <property type="match status" value="1"/>
</dbReference>
<dbReference type="Pfam" id="PF00201">
    <property type="entry name" value="UDPGT"/>
    <property type="match status" value="1"/>
</dbReference>
<dbReference type="SUPFAM" id="SSF53756">
    <property type="entry name" value="UDP-Glycosyltransferase/glycogen phosphorylase"/>
    <property type="match status" value="1"/>
</dbReference>
<dbReference type="PROSITE" id="PS00375">
    <property type="entry name" value="UDPGT"/>
    <property type="match status" value="1"/>
</dbReference>
<sequence length="463" mass="50744">MAVDTMESVAVVAVPFPAQGHLNQLLHLSLLLASRGLSVHYAAPPPHVRQARARVHGWDPRALGSIHFHDLDVPAYDSPAPDLAAPSPFPNHLMPMFEAFAAAARAPLAALLQRLSTSYRRVAVVFDRLNPFAATEAARLANADAFGLQCVAISYTVGWLDPGHRLLSDYGLQFLPPDDCMSREFVDLVFRMEEEEQGAPVAGLVMNTCRALEGEFLDAVAAQPPFQGQRFFAVGPLNPLLLDADARTAPRHECLEWLDRQPPESVLYVSFGTTSCLHADQVAELAAALKGSKQRFVWVLRDADRADIYAESGDSRHAKFLSEFTRETEGTGLVVTGWAPQLEILAHGATAAFMSHCGWNSIIESLSHGKPVLAWPMHSDQPWDSELLCNYFKAGLLVRPWEKHAEIIPAQAIQKVIEEAMLSDSGMAVRQRAKELGEAVRASVADGGNSRKDLDDFIGYITR</sequence>
<gene>
    <name evidence="4" type="primary">CISZOG2</name>
    <name evidence="4" type="synonym">CZOG2</name>
</gene>
<keyword id="KW-0328">Glycosyltransferase</keyword>
<keyword id="KW-1185">Reference proteome</keyword>
<keyword id="KW-0808">Transferase</keyword>
<protein>
    <recommendedName>
        <fullName evidence="4">Cis-zeatin O-glucosyltransferase 2</fullName>
        <shortName evidence="4">cisZOG2</shortName>
        <ecNumber evidence="3">2.4.1.215</ecNumber>
    </recommendedName>
</protein>
<organism>
    <name type="scientific">Zea mays</name>
    <name type="common">Maize</name>
    <dbReference type="NCBI Taxonomy" id="4577"/>
    <lineage>
        <taxon>Eukaryota</taxon>
        <taxon>Viridiplantae</taxon>
        <taxon>Streptophyta</taxon>
        <taxon>Embryophyta</taxon>
        <taxon>Tracheophyta</taxon>
        <taxon>Spermatophyta</taxon>
        <taxon>Magnoliopsida</taxon>
        <taxon>Liliopsida</taxon>
        <taxon>Poales</taxon>
        <taxon>Poaceae</taxon>
        <taxon>PACMAD clade</taxon>
        <taxon>Panicoideae</taxon>
        <taxon>Andropogonodae</taxon>
        <taxon>Andropogoneae</taxon>
        <taxon>Tripsacinae</taxon>
        <taxon>Zea</taxon>
    </lineage>
</organism>
<evidence type="ECO:0000250" key="1">
    <source>
        <dbReference type="UniProtKB" id="A0A0A1HA03"/>
    </source>
</evidence>
<evidence type="ECO:0000250" key="2">
    <source>
        <dbReference type="UniProtKB" id="P51094"/>
    </source>
</evidence>
<evidence type="ECO:0000269" key="3">
    <source>
    </source>
</evidence>
<evidence type="ECO:0000303" key="4">
    <source>
    </source>
</evidence>
<evidence type="ECO:0000305" key="5"/>